<dbReference type="EC" id="2.4.2.9" evidence="1"/>
<dbReference type="EMBL" id="CP001087">
    <property type="protein sequence ID" value="ACN13647.1"/>
    <property type="molecule type" value="Genomic_DNA"/>
</dbReference>
<dbReference type="RefSeq" id="WP_012662896.1">
    <property type="nucleotide sequence ID" value="NC_012108.1"/>
</dbReference>
<dbReference type="SMR" id="C0QHT9"/>
<dbReference type="STRING" id="177437.HRM2_05330"/>
<dbReference type="KEGG" id="dat:HRM2_05330"/>
<dbReference type="eggNOG" id="COG0035">
    <property type="taxonomic scope" value="Bacteria"/>
</dbReference>
<dbReference type="HOGENOM" id="CLU_067096_2_2_7"/>
<dbReference type="OrthoDB" id="9781675at2"/>
<dbReference type="UniPathway" id="UPA00574">
    <property type="reaction ID" value="UER00636"/>
</dbReference>
<dbReference type="Proteomes" id="UP000000442">
    <property type="component" value="Chromosome"/>
</dbReference>
<dbReference type="GO" id="GO:0005525">
    <property type="term" value="F:GTP binding"/>
    <property type="evidence" value="ECO:0007669"/>
    <property type="project" value="UniProtKB-KW"/>
</dbReference>
<dbReference type="GO" id="GO:0000287">
    <property type="term" value="F:magnesium ion binding"/>
    <property type="evidence" value="ECO:0007669"/>
    <property type="project" value="UniProtKB-UniRule"/>
</dbReference>
<dbReference type="GO" id="GO:0004845">
    <property type="term" value="F:uracil phosphoribosyltransferase activity"/>
    <property type="evidence" value="ECO:0007669"/>
    <property type="project" value="UniProtKB-UniRule"/>
</dbReference>
<dbReference type="GO" id="GO:0044206">
    <property type="term" value="P:UMP salvage"/>
    <property type="evidence" value="ECO:0007669"/>
    <property type="project" value="UniProtKB-UniRule"/>
</dbReference>
<dbReference type="GO" id="GO:0006223">
    <property type="term" value="P:uracil salvage"/>
    <property type="evidence" value="ECO:0007669"/>
    <property type="project" value="InterPro"/>
</dbReference>
<dbReference type="CDD" id="cd06223">
    <property type="entry name" value="PRTases_typeI"/>
    <property type="match status" value="1"/>
</dbReference>
<dbReference type="FunFam" id="3.40.50.2020:FF:000003">
    <property type="entry name" value="Uracil phosphoribosyltransferase"/>
    <property type="match status" value="1"/>
</dbReference>
<dbReference type="Gene3D" id="3.40.50.2020">
    <property type="match status" value="1"/>
</dbReference>
<dbReference type="HAMAP" id="MF_01218_B">
    <property type="entry name" value="Upp_B"/>
    <property type="match status" value="1"/>
</dbReference>
<dbReference type="InterPro" id="IPR000836">
    <property type="entry name" value="PRibTrfase_dom"/>
</dbReference>
<dbReference type="InterPro" id="IPR029057">
    <property type="entry name" value="PRTase-like"/>
</dbReference>
<dbReference type="InterPro" id="IPR034332">
    <property type="entry name" value="Upp_B"/>
</dbReference>
<dbReference type="InterPro" id="IPR050054">
    <property type="entry name" value="UPRTase/APRTase"/>
</dbReference>
<dbReference type="InterPro" id="IPR005765">
    <property type="entry name" value="Ura_phspho_trans"/>
</dbReference>
<dbReference type="NCBIfam" id="NF001097">
    <property type="entry name" value="PRK00129.1"/>
    <property type="match status" value="1"/>
</dbReference>
<dbReference type="NCBIfam" id="TIGR01091">
    <property type="entry name" value="upp"/>
    <property type="match status" value="1"/>
</dbReference>
<dbReference type="PANTHER" id="PTHR32315">
    <property type="entry name" value="ADENINE PHOSPHORIBOSYLTRANSFERASE"/>
    <property type="match status" value="1"/>
</dbReference>
<dbReference type="PANTHER" id="PTHR32315:SF4">
    <property type="entry name" value="URACIL PHOSPHORIBOSYLTRANSFERASE, CHLOROPLASTIC"/>
    <property type="match status" value="1"/>
</dbReference>
<dbReference type="Pfam" id="PF14681">
    <property type="entry name" value="UPRTase"/>
    <property type="match status" value="1"/>
</dbReference>
<dbReference type="SUPFAM" id="SSF53271">
    <property type="entry name" value="PRTase-like"/>
    <property type="match status" value="1"/>
</dbReference>
<reference key="1">
    <citation type="journal article" date="2009" name="Environ. Microbiol.">
        <title>Genome sequence of Desulfobacterium autotrophicum HRM2, a marine sulfate reducer oxidizing organic carbon completely to carbon dioxide.</title>
        <authorList>
            <person name="Strittmatter A.W."/>
            <person name="Liesegang H."/>
            <person name="Rabus R."/>
            <person name="Decker I."/>
            <person name="Amann J."/>
            <person name="Andres S."/>
            <person name="Henne A."/>
            <person name="Fricke W.F."/>
            <person name="Martinez-Arias R."/>
            <person name="Bartels D."/>
            <person name="Goesmann A."/>
            <person name="Krause L."/>
            <person name="Puehler A."/>
            <person name="Klenk H.P."/>
            <person name="Richter M."/>
            <person name="Schuler M."/>
            <person name="Gloeckner F.O."/>
            <person name="Meyerdierks A."/>
            <person name="Gottschalk G."/>
            <person name="Amann R."/>
        </authorList>
    </citation>
    <scope>NUCLEOTIDE SEQUENCE [LARGE SCALE GENOMIC DNA]</scope>
    <source>
        <strain>ATCC 43914 / DSM 3382 / VKM B-1955 / HRM2</strain>
    </source>
</reference>
<name>UPP_DESAH</name>
<protein>
    <recommendedName>
        <fullName evidence="1">Uracil phosphoribosyltransferase</fullName>
        <ecNumber evidence="1">2.4.2.9</ecNumber>
    </recommendedName>
    <alternativeName>
        <fullName evidence="1">UMP pyrophosphorylase</fullName>
    </alternativeName>
    <alternativeName>
        <fullName evidence="1">UPRTase</fullName>
    </alternativeName>
</protein>
<organism>
    <name type="scientific">Desulforapulum autotrophicum (strain ATCC 43914 / DSM 3382 / VKM B-1955 / HRM2)</name>
    <name type="common">Desulfobacterium autotrophicum</name>
    <dbReference type="NCBI Taxonomy" id="177437"/>
    <lineage>
        <taxon>Bacteria</taxon>
        <taxon>Pseudomonadati</taxon>
        <taxon>Thermodesulfobacteriota</taxon>
        <taxon>Desulfobacteria</taxon>
        <taxon>Desulfobacterales</taxon>
        <taxon>Desulfobacteraceae</taxon>
        <taxon>Desulforapulum</taxon>
    </lineage>
</organism>
<feature type="chain" id="PRO_1000213927" description="Uracil phosphoribosyltransferase">
    <location>
        <begin position="1"/>
        <end position="208"/>
    </location>
</feature>
<feature type="binding site" evidence="1">
    <location>
        <position position="78"/>
    </location>
    <ligand>
        <name>5-phospho-alpha-D-ribose 1-diphosphate</name>
        <dbReference type="ChEBI" id="CHEBI:58017"/>
    </ligand>
</feature>
<feature type="binding site" evidence="1">
    <location>
        <position position="103"/>
    </location>
    <ligand>
        <name>5-phospho-alpha-D-ribose 1-diphosphate</name>
        <dbReference type="ChEBI" id="CHEBI:58017"/>
    </ligand>
</feature>
<feature type="binding site" evidence="1">
    <location>
        <begin position="130"/>
        <end position="138"/>
    </location>
    <ligand>
        <name>5-phospho-alpha-D-ribose 1-diphosphate</name>
        <dbReference type="ChEBI" id="CHEBI:58017"/>
    </ligand>
</feature>
<feature type="binding site" evidence="1">
    <location>
        <position position="193"/>
    </location>
    <ligand>
        <name>uracil</name>
        <dbReference type="ChEBI" id="CHEBI:17568"/>
    </ligand>
</feature>
<feature type="binding site" evidence="1">
    <location>
        <begin position="198"/>
        <end position="200"/>
    </location>
    <ligand>
        <name>uracil</name>
        <dbReference type="ChEBI" id="CHEBI:17568"/>
    </ligand>
</feature>
<feature type="binding site" evidence="1">
    <location>
        <position position="199"/>
    </location>
    <ligand>
        <name>5-phospho-alpha-D-ribose 1-diphosphate</name>
        <dbReference type="ChEBI" id="CHEBI:58017"/>
    </ligand>
</feature>
<accession>C0QHT9</accession>
<gene>
    <name evidence="1" type="primary">upp</name>
    <name type="ordered locus">HRM2_05330</name>
</gene>
<keyword id="KW-0021">Allosteric enzyme</keyword>
<keyword id="KW-0328">Glycosyltransferase</keyword>
<keyword id="KW-0342">GTP-binding</keyword>
<keyword id="KW-0460">Magnesium</keyword>
<keyword id="KW-0547">Nucleotide-binding</keyword>
<keyword id="KW-1185">Reference proteome</keyword>
<keyword id="KW-0808">Transferase</keyword>
<proteinExistence type="inferred from homology"/>
<evidence type="ECO:0000255" key="1">
    <source>
        <dbReference type="HAMAP-Rule" id="MF_01218"/>
    </source>
</evidence>
<sequence length="208" mass="22611">MAVYVEDHPLIKHKLGLMRQKDISTKDFRDLASEVAGLLTYEATQDMETEVATIDGWAGPVQVERIKGKKITIVPILRAGLGMMDGVINLIPSAKVSVVGFYRDEKTLQPVQYYVKTASAMDERIALILDPMLATGGTLLATIELLKASGCTRIKGLFLVAAPEGIEKIQKAHPDVDIYVAAIDERLNEVGYILPGLGDAGDKIFGTK</sequence>
<comment type="function">
    <text evidence="1">Catalyzes the conversion of uracil and 5-phospho-alpha-D-ribose 1-diphosphate (PRPP) to UMP and diphosphate.</text>
</comment>
<comment type="catalytic activity">
    <reaction evidence="1">
        <text>UMP + diphosphate = 5-phospho-alpha-D-ribose 1-diphosphate + uracil</text>
        <dbReference type="Rhea" id="RHEA:13017"/>
        <dbReference type="ChEBI" id="CHEBI:17568"/>
        <dbReference type="ChEBI" id="CHEBI:33019"/>
        <dbReference type="ChEBI" id="CHEBI:57865"/>
        <dbReference type="ChEBI" id="CHEBI:58017"/>
        <dbReference type="EC" id="2.4.2.9"/>
    </reaction>
</comment>
<comment type="cofactor">
    <cofactor evidence="1">
        <name>Mg(2+)</name>
        <dbReference type="ChEBI" id="CHEBI:18420"/>
    </cofactor>
    <text evidence="1">Binds 1 Mg(2+) ion per subunit. The magnesium is bound as Mg-PRPP.</text>
</comment>
<comment type="activity regulation">
    <text evidence="1">Allosterically activated by GTP.</text>
</comment>
<comment type="pathway">
    <text evidence="1">Pyrimidine metabolism; UMP biosynthesis via salvage pathway; UMP from uracil: step 1/1.</text>
</comment>
<comment type="similarity">
    <text evidence="1">Belongs to the UPRTase family.</text>
</comment>